<evidence type="ECO:0000255" key="1">
    <source>
        <dbReference type="HAMAP-Rule" id="MF_01218"/>
    </source>
</evidence>
<comment type="function">
    <text evidence="1">Catalyzes the conversion of uracil and 5-phospho-alpha-D-ribose 1-diphosphate (PRPP) to UMP and diphosphate.</text>
</comment>
<comment type="catalytic activity">
    <reaction evidence="1">
        <text>UMP + diphosphate = 5-phospho-alpha-D-ribose 1-diphosphate + uracil</text>
        <dbReference type="Rhea" id="RHEA:13017"/>
        <dbReference type="ChEBI" id="CHEBI:17568"/>
        <dbReference type="ChEBI" id="CHEBI:33019"/>
        <dbReference type="ChEBI" id="CHEBI:57865"/>
        <dbReference type="ChEBI" id="CHEBI:58017"/>
        <dbReference type="EC" id="2.4.2.9"/>
    </reaction>
</comment>
<comment type="cofactor">
    <cofactor evidence="1">
        <name>Mg(2+)</name>
        <dbReference type="ChEBI" id="CHEBI:18420"/>
    </cofactor>
    <text evidence="1">Binds 1 Mg(2+) ion per subunit. The magnesium is bound as Mg-PRPP.</text>
</comment>
<comment type="activity regulation">
    <text evidence="1">Allosterically activated by GTP.</text>
</comment>
<comment type="pathway">
    <text evidence="1">Pyrimidine metabolism; UMP biosynthesis via salvage pathway; UMP from uracil: step 1/1.</text>
</comment>
<comment type="similarity">
    <text evidence="1">Belongs to the UPRTase family.</text>
</comment>
<protein>
    <recommendedName>
        <fullName evidence="1">Uracil phosphoribosyltransferase</fullName>
        <ecNumber evidence="1">2.4.2.9</ecNumber>
    </recommendedName>
    <alternativeName>
        <fullName evidence="1">UMP pyrophosphorylase</fullName>
    </alternativeName>
    <alternativeName>
        <fullName evidence="1">UPRTase</fullName>
    </alternativeName>
</protein>
<keyword id="KW-0021">Allosteric enzyme</keyword>
<keyword id="KW-0328">Glycosyltransferase</keyword>
<keyword id="KW-0342">GTP-binding</keyword>
<keyword id="KW-0460">Magnesium</keyword>
<keyword id="KW-0547">Nucleotide-binding</keyword>
<keyword id="KW-1185">Reference proteome</keyword>
<keyword id="KW-0808">Transferase</keyword>
<gene>
    <name evidence="1" type="primary">upp</name>
    <name type="ordered locus">Swoo_2743</name>
</gene>
<dbReference type="EC" id="2.4.2.9" evidence="1"/>
<dbReference type="EMBL" id="CP000961">
    <property type="protein sequence ID" value="ACA87019.1"/>
    <property type="molecule type" value="Genomic_DNA"/>
</dbReference>
<dbReference type="RefSeq" id="WP_012325355.1">
    <property type="nucleotide sequence ID" value="NC_010506.1"/>
</dbReference>
<dbReference type="SMR" id="B1KIG8"/>
<dbReference type="STRING" id="392500.Swoo_2743"/>
<dbReference type="KEGG" id="swd:Swoo_2743"/>
<dbReference type="eggNOG" id="COG0035">
    <property type="taxonomic scope" value="Bacteria"/>
</dbReference>
<dbReference type="HOGENOM" id="CLU_067096_2_2_6"/>
<dbReference type="UniPathway" id="UPA00574">
    <property type="reaction ID" value="UER00636"/>
</dbReference>
<dbReference type="Proteomes" id="UP000002168">
    <property type="component" value="Chromosome"/>
</dbReference>
<dbReference type="GO" id="GO:0005525">
    <property type="term" value="F:GTP binding"/>
    <property type="evidence" value="ECO:0007669"/>
    <property type="project" value="UniProtKB-KW"/>
</dbReference>
<dbReference type="GO" id="GO:0000287">
    <property type="term" value="F:magnesium ion binding"/>
    <property type="evidence" value="ECO:0007669"/>
    <property type="project" value="UniProtKB-UniRule"/>
</dbReference>
<dbReference type="GO" id="GO:0004845">
    <property type="term" value="F:uracil phosphoribosyltransferase activity"/>
    <property type="evidence" value="ECO:0007669"/>
    <property type="project" value="UniProtKB-UniRule"/>
</dbReference>
<dbReference type="GO" id="GO:0044206">
    <property type="term" value="P:UMP salvage"/>
    <property type="evidence" value="ECO:0007669"/>
    <property type="project" value="UniProtKB-UniRule"/>
</dbReference>
<dbReference type="GO" id="GO:0006223">
    <property type="term" value="P:uracil salvage"/>
    <property type="evidence" value="ECO:0007669"/>
    <property type="project" value="InterPro"/>
</dbReference>
<dbReference type="CDD" id="cd06223">
    <property type="entry name" value="PRTases_typeI"/>
    <property type="match status" value="1"/>
</dbReference>
<dbReference type="FunFam" id="3.40.50.2020:FF:000003">
    <property type="entry name" value="Uracil phosphoribosyltransferase"/>
    <property type="match status" value="1"/>
</dbReference>
<dbReference type="Gene3D" id="3.40.50.2020">
    <property type="match status" value="1"/>
</dbReference>
<dbReference type="HAMAP" id="MF_01218_B">
    <property type="entry name" value="Upp_B"/>
    <property type="match status" value="1"/>
</dbReference>
<dbReference type="InterPro" id="IPR000836">
    <property type="entry name" value="PRibTrfase_dom"/>
</dbReference>
<dbReference type="InterPro" id="IPR029057">
    <property type="entry name" value="PRTase-like"/>
</dbReference>
<dbReference type="InterPro" id="IPR034332">
    <property type="entry name" value="Upp_B"/>
</dbReference>
<dbReference type="InterPro" id="IPR050054">
    <property type="entry name" value="UPRTase/APRTase"/>
</dbReference>
<dbReference type="InterPro" id="IPR005765">
    <property type="entry name" value="Ura_phspho_trans"/>
</dbReference>
<dbReference type="NCBIfam" id="NF001097">
    <property type="entry name" value="PRK00129.1"/>
    <property type="match status" value="1"/>
</dbReference>
<dbReference type="NCBIfam" id="TIGR01091">
    <property type="entry name" value="upp"/>
    <property type="match status" value="1"/>
</dbReference>
<dbReference type="PANTHER" id="PTHR32315">
    <property type="entry name" value="ADENINE PHOSPHORIBOSYLTRANSFERASE"/>
    <property type="match status" value="1"/>
</dbReference>
<dbReference type="PANTHER" id="PTHR32315:SF4">
    <property type="entry name" value="URACIL PHOSPHORIBOSYLTRANSFERASE, CHLOROPLASTIC"/>
    <property type="match status" value="1"/>
</dbReference>
<dbReference type="Pfam" id="PF14681">
    <property type="entry name" value="UPRTase"/>
    <property type="match status" value="1"/>
</dbReference>
<dbReference type="SUPFAM" id="SSF53271">
    <property type="entry name" value="PRTase-like"/>
    <property type="match status" value="1"/>
</dbReference>
<reference key="1">
    <citation type="submission" date="2008-02" db="EMBL/GenBank/DDBJ databases">
        <title>Complete sequence of Shewanella woodyi ATCC 51908.</title>
        <authorList>
            <consortium name="US DOE Joint Genome Institute"/>
            <person name="Copeland A."/>
            <person name="Lucas S."/>
            <person name="Lapidus A."/>
            <person name="Glavina del Rio T."/>
            <person name="Dalin E."/>
            <person name="Tice H."/>
            <person name="Bruce D."/>
            <person name="Goodwin L."/>
            <person name="Pitluck S."/>
            <person name="Sims D."/>
            <person name="Brettin T."/>
            <person name="Detter J.C."/>
            <person name="Han C."/>
            <person name="Kuske C.R."/>
            <person name="Schmutz J."/>
            <person name="Larimer F."/>
            <person name="Land M."/>
            <person name="Hauser L."/>
            <person name="Kyrpides N."/>
            <person name="Lykidis A."/>
            <person name="Zhao J.-S."/>
            <person name="Richardson P."/>
        </authorList>
    </citation>
    <scope>NUCLEOTIDE SEQUENCE [LARGE SCALE GENOMIC DNA]</scope>
    <source>
        <strain>ATCC 51908 / MS32</strain>
    </source>
</reference>
<organism>
    <name type="scientific">Shewanella woodyi (strain ATCC 51908 / MS32)</name>
    <dbReference type="NCBI Taxonomy" id="392500"/>
    <lineage>
        <taxon>Bacteria</taxon>
        <taxon>Pseudomonadati</taxon>
        <taxon>Pseudomonadota</taxon>
        <taxon>Gammaproteobacteria</taxon>
        <taxon>Alteromonadales</taxon>
        <taxon>Shewanellaceae</taxon>
        <taxon>Shewanella</taxon>
    </lineage>
</organism>
<name>UPP_SHEWM</name>
<proteinExistence type="inferred from homology"/>
<sequence>MKVVEVKHPLVRHKIGLMREGDISTKRFRELAAEVGSLLTYEATADFETEAVTIEGWNGPVEVEQIKGKKVTVVPILRAGLGMMDGVLEHIPSARISVVGMYRDEETLEPVPYFEKLASDMPSRIALVVDPMLATGGSMISTIDLLKERGCTSIKALVLVAAPEGVAALEKAHPDIELYTASIDDCLNDQGYILPGLGDAGDKIFGTK</sequence>
<feature type="chain" id="PRO_1000139163" description="Uracil phosphoribosyltransferase">
    <location>
        <begin position="1"/>
        <end position="208"/>
    </location>
</feature>
<feature type="binding site" evidence="1">
    <location>
        <position position="78"/>
    </location>
    <ligand>
        <name>5-phospho-alpha-D-ribose 1-diphosphate</name>
        <dbReference type="ChEBI" id="CHEBI:58017"/>
    </ligand>
</feature>
<feature type="binding site" evidence="1">
    <location>
        <position position="103"/>
    </location>
    <ligand>
        <name>5-phospho-alpha-D-ribose 1-diphosphate</name>
        <dbReference type="ChEBI" id="CHEBI:58017"/>
    </ligand>
</feature>
<feature type="binding site" evidence="1">
    <location>
        <begin position="130"/>
        <end position="138"/>
    </location>
    <ligand>
        <name>5-phospho-alpha-D-ribose 1-diphosphate</name>
        <dbReference type="ChEBI" id="CHEBI:58017"/>
    </ligand>
</feature>
<feature type="binding site" evidence="1">
    <location>
        <position position="193"/>
    </location>
    <ligand>
        <name>uracil</name>
        <dbReference type="ChEBI" id="CHEBI:17568"/>
    </ligand>
</feature>
<feature type="binding site" evidence="1">
    <location>
        <begin position="198"/>
        <end position="200"/>
    </location>
    <ligand>
        <name>uracil</name>
        <dbReference type="ChEBI" id="CHEBI:17568"/>
    </ligand>
</feature>
<feature type="binding site" evidence="1">
    <location>
        <position position="199"/>
    </location>
    <ligand>
        <name>5-phospho-alpha-D-ribose 1-diphosphate</name>
        <dbReference type="ChEBI" id="CHEBI:58017"/>
    </ligand>
</feature>
<accession>B1KIG8</accession>